<proteinExistence type="inferred from homology"/>
<name>TRUD_VIBC3</name>
<protein>
    <recommendedName>
        <fullName evidence="1">tRNA pseudouridine synthase D</fullName>
        <ecNumber evidence="1">5.4.99.27</ecNumber>
    </recommendedName>
    <alternativeName>
        <fullName evidence="1">tRNA pseudouridine(13) synthase</fullName>
    </alternativeName>
    <alternativeName>
        <fullName evidence="1">tRNA pseudouridylate synthase D</fullName>
    </alternativeName>
    <alternativeName>
        <fullName evidence="1">tRNA-uridine isomerase D</fullName>
    </alternativeName>
</protein>
<dbReference type="EC" id="5.4.99.27" evidence="1"/>
<dbReference type="EMBL" id="CP000627">
    <property type="protein sequence ID" value="ABQ20421.1"/>
    <property type="molecule type" value="Genomic_DNA"/>
</dbReference>
<dbReference type="EMBL" id="CP001235">
    <property type="protein sequence ID" value="ACP08566.1"/>
    <property type="molecule type" value="Genomic_DNA"/>
</dbReference>
<dbReference type="RefSeq" id="WP_000129752.1">
    <property type="nucleotide sequence ID" value="NZ_JAACZH010000029.1"/>
</dbReference>
<dbReference type="SMR" id="A5F9D8"/>
<dbReference type="KEGG" id="vco:VC0395_A0058"/>
<dbReference type="KEGG" id="vcr:VC395_0547"/>
<dbReference type="PATRIC" id="fig|345073.21.peg.537"/>
<dbReference type="eggNOG" id="COG0585">
    <property type="taxonomic scope" value="Bacteria"/>
</dbReference>
<dbReference type="HOGENOM" id="CLU_005281_4_0_6"/>
<dbReference type="OrthoDB" id="1550679at2"/>
<dbReference type="Proteomes" id="UP000000249">
    <property type="component" value="Chromosome 2"/>
</dbReference>
<dbReference type="GO" id="GO:0005829">
    <property type="term" value="C:cytosol"/>
    <property type="evidence" value="ECO:0007669"/>
    <property type="project" value="TreeGrafter"/>
</dbReference>
<dbReference type="GO" id="GO:0003723">
    <property type="term" value="F:RNA binding"/>
    <property type="evidence" value="ECO:0007669"/>
    <property type="project" value="InterPro"/>
</dbReference>
<dbReference type="GO" id="GO:0160150">
    <property type="term" value="F:tRNA pseudouridine(13) synthase activity"/>
    <property type="evidence" value="ECO:0007669"/>
    <property type="project" value="UniProtKB-EC"/>
</dbReference>
<dbReference type="GO" id="GO:0031119">
    <property type="term" value="P:tRNA pseudouridine synthesis"/>
    <property type="evidence" value="ECO:0007669"/>
    <property type="project" value="UniProtKB-UniRule"/>
</dbReference>
<dbReference type="CDD" id="cd02575">
    <property type="entry name" value="PseudoU_synth_EcTruD"/>
    <property type="match status" value="1"/>
</dbReference>
<dbReference type="Gene3D" id="3.30.2350.20">
    <property type="entry name" value="TruD, catalytic domain"/>
    <property type="match status" value="1"/>
</dbReference>
<dbReference type="Gene3D" id="3.30.2340.10">
    <property type="entry name" value="TruD, insertion domain"/>
    <property type="match status" value="1"/>
</dbReference>
<dbReference type="HAMAP" id="MF_01082">
    <property type="entry name" value="TruD"/>
    <property type="match status" value="1"/>
</dbReference>
<dbReference type="InterPro" id="IPR020103">
    <property type="entry name" value="PsdUridine_synth_cat_dom_sf"/>
</dbReference>
<dbReference type="InterPro" id="IPR001656">
    <property type="entry name" value="PsdUridine_synth_TruD"/>
</dbReference>
<dbReference type="InterPro" id="IPR020119">
    <property type="entry name" value="PsdUridine_synth_TruD_CS"/>
</dbReference>
<dbReference type="InterPro" id="IPR011760">
    <property type="entry name" value="PsdUridine_synth_TruD_insert"/>
</dbReference>
<dbReference type="InterPro" id="IPR042214">
    <property type="entry name" value="TruD_catalytic"/>
</dbReference>
<dbReference type="InterPro" id="IPR043165">
    <property type="entry name" value="TruD_insert_sf"/>
</dbReference>
<dbReference type="InterPro" id="IPR050170">
    <property type="entry name" value="TruD_pseudoU_synthase"/>
</dbReference>
<dbReference type="NCBIfam" id="NF002155">
    <property type="entry name" value="PRK00984.1-4"/>
    <property type="match status" value="1"/>
</dbReference>
<dbReference type="PANTHER" id="PTHR47811">
    <property type="entry name" value="TRNA PSEUDOURIDINE SYNTHASE D"/>
    <property type="match status" value="1"/>
</dbReference>
<dbReference type="PANTHER" id="PTHR47811:SF1">
    <property type="entry name" value="TRNA PSEUDOURIDINE SYNTHASE D"/>
    <property type="match status" value="1"/>
</dbReference>
<dbReference type="Pfam" id="PF01142">
    <property type="entry name" value="TruD"/>
    <property type="match status" value="2"/>
</dbReference>
<dbReference type="SUPFAM" id="SSF55120">
    <property type="entry name" value="Pseudouridine synthase"/>
    <property type="match status" value="1"/>
</dbReference>
<dbReference type="PROSITE" id="PS50984">
    <property type="entry name" value="TRUD"/>
    <property type="match status" value="1"/>
</dbReference>
<dbReference type="PROSITE" id="PS01268">
    <property type="entry name" value="UPF0024"/>
    <property type="match status" value="1"/>
</dbReference>
<feature type="chain" id="PRO_1000084767" description="tRNA pseudouridine synthase D">
    <location>
        <begin position="1"/>
        <end position="361"/>
    </location>
</feature>
<feature type="domain" description="TRUD" evidence="1">
    <location>
        <begin position="158"/>
        <end position="303"/>
    </location>
</feature>
<feature type="active site" description="Nucleophile" evidence="1">
    <location>
        <position position="81"/>
    </location>
</feature>
<keyword id="KW-0413">Isomerase</keyword>
<keyword id="KW-0819">tRNA processing</keyword>
<gene>
    <name evidence="1" type="primary">truD</name>
    <name type="ordered locus">VC0395_A0058</name>
    <name type="ordered locus">VC395_0547</name>
</gene>
<organism>
    <name type="scientific">Vibrio cholerae serotype O1 (strain ATCC 39541 / Classical Ogawa 395 / O395)</name>
    <dbReference type="NCBI Taxonomy" id="345073"/>
    <lineage>
        <taxon>Bacteria</taxon>
        <taxon>Pseudomonadati</taxon>
        <taxon>Pseudomonadota</taxon>
        <taxon>Gammaproteobacteria</taxon>
        <taxon>Vibrionales</taxon>
        <taxon>Vibrionaceae</taxon>
        <taxon>Vibrio</taxon>
    </lineage>
</organism>
<comment type="function">
    <text evidence="1">Responsible for synthesis of pseudouridine from uracil-13 in transfer RNAs.</text>
</comment>
<comment type="catalytic activity">
    <reaction evidence="1">
        <text>uridine(13) in tRNA = pseudouridine(13) in tRNA</text>
        <dbReference type="Rhea" id="RHEA:42540"/>
        <dbReference type="Rhea" id="RHEA-COMP:10105"/>
        <dbReference type="Rhea" id="RHEA-COMP:10106"/>
        <dbReference type="ChEBI" id="CHEBI:65314"/>
        <dbReference type="ChEBI" id="CHEBI:65315"/>
        <dbReference type="EC" id="5.4.99.27"/>
    </reaction>
</comment>
<comment type="similarity">
    <text evidence="1">Belongs to the pseudouridine synthase TruD family.</text>
</comment>
<accession>A5F9D8</accession>
<accession>C3LX56</accession>
<evidence type="ECO:0000255" key="1">
    <source>
        <dbReference type="HAMAP-Rule" id="MF_01082"/>
    </source>
</evidence>
<reference key="1">
    <citation type="submission" date="2007-03" db="EMBL/GenBank/DDBJ databases">
        <authorList>
            <person name="Heidelberg J."/>
        </authorList>
    </citation>
    <scope>NUCLEOTIDE SEQUENCE [LARGE SCALE GENOMIC DNA]</scope>
    <source>
        <strain>ATCC 39541 / Classical Ogawa 395 / O395</strain>
    </source>
</reference>
<reference key="2">
    <citation type="journal article" date="2008" name="PLoS ONE">
        <title>A recalibrated molecular clock and independent origins for the cholera pandemic clones.</title>
        <authorList>
            <person name="Feng L."/>
            <person name="Reeves P.R."/>
            <person name="Lan R."/>
            <person name="Ren Y."/>
            <person name="Gao C."/>
            <person name="Zhou Z."/>
            <person name="Ren Y."/>
            <person name="Cheng J."/>
            <person name="Wang W."/>
            <person name="Wang J."/>
            <person name="Qian W."/>
            <person name="Li D."/>
            <person name="Wang L."/>
        </authorList>
    </citation>
    <scope>NUCLEOTIDE SEQUENCE [LARGE SCALE GENOMIC DNA]</scope>
    <source>
        <strain>ATCC 39541 / Classical Ogawa 395 / O395</strain>
    </source>
</reference>
<sequence>MTDILSPLAYLCGKPTAKAKLKALPEHFQVNEVLGYSLTGHGEHLMVRIRKTGENTSFVANELAKACGVPSRAVSWAGLKDRHAVTEQWLSVHLPNGETPDFSAFLAQYPSIEILEVTRHDKKLRPGDLQGNEFVVTLSEVSDVAAVLSRLETVAELGVPNYFGSQRFGRHGNNLSEARRWGRDNVRSRNQNQRSLYLSAARSWIFNQIVSKRIEQGCFARFIEGDIALAEQQMFNVDGDLALWDQRLQAGEVAISAALAGDNALPTSGQALPLEQAELDAEPDLMALIRGNRMRHDRRAIALKAQNLSWQVQEDQITLRFSLDAGSFATSLVRELIEEIPVVRHYDQGHEQESRDSESED</sequence>